<feature type="chain" id="PRO_0000311960" description="Sperm-tail PG-rich repeat-containing protein 2">
    <location>
        <begin position="1"/>
        <end position="459"/>
    </location>
</feature>
<feature type="repeat" description="STPGR 1">
    <location>
        <begin position="21"/>
        <end position="30"/>
    </location>
</feature>
<feature type="repeat" description="STPGR 2">
    <location>
        <begin position="63"/>
        <end position="73"/>
    </location>
</feature>
<feature type="repeat" description="STPGR 3">
    <location>
        <begin position="119"/>
        <end position="148"/>
    </location>
</feature>
<feature type="repeat" description="STPGR 4">
    <location>
        <begin position="157"/>
        <end position="203"/>
    </location>
</feature>
<feature type="repeat" description="STPGR 5">
    <location>
        <begin position="213"/>
        <end position="243"/>
    </location>
</feature>
<feature type="repeat" description="STPGR 6">
    <location>
        <begin position="257"/>
        <end position="268"/>
    </location>
</feature>
<feature type="repeat" description="STPGR 7">
    <location>
        <begin position="351"/>
        <end position="377"/>
    </location>
</feature>
<feature type="repeat" description="STPGR 8">
    <location>
        <begin position="400"/>
        <end position="410"/>
    </location>
</feature>
<feature type="repeat" description="STPGR 9">
    <location>
        <begin position="433"/>
        <end position="443"/>
    </location>
</feature>
<feature type="sequence variant" id="VAR_037359" description="In dbSNP:rs13131259.">
    <original>C</original>
    <variation>W</variation>
    <location>
        <position position="111"/>
    </location>
</feature>
<feature type="sequence variant" id="VAR_037360" description="In dbSNP:rs13131258.">
    <original>F</original>
    <variation>V</variation>
    <location>
        <position position="112"/>
    </location>
</feature>
<feature type="sequence variant" id="VAR_037361" description="In dbSNP:rs17558193.">
    <original>Y</original>
    <variation>H</variation>
    <location>
        <position position="125"/>
    </location>
</feature>
<feature type="sequence variant" id="VAR_037362" description="In dbSNP:rs2903150.">
    <original>I</original>
    <variation>V</variation>
    <location>
        <position position="178"/>
    </location>
</feature>
<feature type="sequence variant" id="VAR_037363" description="In dbSNP:rs7654193.">
    <original>K</original>
    <variation>R</variation>
    <location>
        <position position="279"/>
    </location>
</feature>
<feature type="sequence variant" id="VAR_037364" description="In dbSNP:rs17026871.">
    <original>V</original>
    <variation>A</variation>
    <location>
        <position position="420"/>
    </location>
</feature>
<name>STPG2_HUMAN</name>
<dbReference type="EMBL" id="CH471057">
    <property type="protein sequence ID" value="EAX06067.1"/>
    <property type="molecule type" value="Genomic_DNA"/>
</dbReference>
<dbReference type="EMBL" id="BC036870">
    <property type="protein sequence ID" value="AAH36870.1"/>
    <property type="molecule type" value="mRNA"/>
</dbReference>
<dbReference type="CCDS" id="CCDS3645.1"/>
<dbReference type="RefSeq" id="NP_777612.1">
    <property type="nucleotide sequence ID" value="NM_174952.3"/>
</dbReference>
<dbReference type="BioGRID" id="130143">
    <property type="interactions" value="7"/>
</dbReference>
<dbReference type="FunCoup" id="Q8N412">
    <property type="interactions" value="14"/>
</dbReference>
<dbReference type="IntAct" id="Q8N412">
    <property type="interactions" value="4"/>
</dbReference>
<dbReference type="STRING" id="9606.ENSP00000295268"/>
<dbReference type="GlyConnect" id="1767">
    <property type="glycosylation" value="1 N-Linked glycan (1 site)"/>
</dbReference>
<dbReference type="GlyCosmos" id="Q8N412">
    <property type="glycosylation" value="1 site, 1 glycan"/>
</dbReference>
<dbReference type="GlyGen" id="Q8N412">
    <property type="glycosylation" value="2 sites, 1 N-linked glycan (1 site)"/>
</dbReference>
<dbReference type="iPTMnet" id="Q8N412"/>
<dbReference type="PhosphoSitePlus" id="Q8N412"/>
<dbReference type="BioMuta" id="STPG2"/>
<dbReference type="DMDM" id="74728806"/>
<dbReference type="MassIVE" id="Q8N412"/>
<dbReference type="PaxDb" id="9606-ENSP00000295268"/>
<dbReference type="PeptideAtlas" id="Q8N412"/>
<dbReference type="ProteomicsDB" id="71860"/>
<dbReference type="Antibodypedia" id="67933">
    <property type="antibodies" value="24 antibodies from 7 providers"/>
</dbReference>
<dbReference type="DNASU" id="285555"/>
<dbReference type="Ensembl" id="ENST00000295268.4">
    <property type="protein sequence ID" value="ENSP00000295268.3"/>
    <property type="gene ID" value="ENSG00000163116.10"/>
</dbReference>
<dbReference type="GeneID" id="285555"/>
<dbReference type="KEGG" id="hsa:285555"/>
<dbReference type="MANE-Select" id="ENST00000295268.4">
    <property type="protein sequence ID" value="ENSP00000295268.3"/>
    <property type="RefSeq nucleotide sequence ID" value="NM_174952.3"/>
    <property type="RefSeq protein sequence ID" value="NP_777612.1"/>
</dbReference>
<dbReference type="UCSC" id="uc003htt.3">
    <property type="organism name" value="human"/>
</dbReference>
<dbReference type="AGR" id="HGNC:28712"/>
<dbReference type="CTD" id="285555"/>
<dbReference type="DisGeNET" id="285555"/>
<dbReference type="GeneCards" id="STPG2"/>
<dbReference type="HGNC" id="HGNC:28712">
    <property type="gene designation" value="STPG2"/>
</dbReference>
<dbReference type="HPA" id="ENSG00000163116">
    <property type="expression patterns" value="Tissue enhanced (testis)"/>
</dbReference>
<dbReference type="neXtProt" id="NX_Q8N412"/>
<dbReference type="OpenTargets" id="ENSG00000163116"/>
<dbReference type="PharmGKB" id="PA162379799"/>
<dbReference type="VEuPathDB" id="HostDB:ENSG00000163116"/>
<dbReference type="eggNOG" id="KOG1198">
    <property type="taxonomic scope" value="Eukaryota"/>
</dbReference>
<dbReference type="GeneTree" id="ENSGT00390000001063"/>
<dbReference type="HOGENOM" id="CLU_040300_1_0_1"/>
<dbReference type="InParanoid" id="Q8N412"/>
<dbReference type="OMA" id="NDPRHAL"/>
<dbReference type="OrthoDB" id="406368at2759"/>
<dbReference type="PAN-GO" id="Q8N412">
    <property type="GO annotations" value="0 GO annotations based on evolutionary models"/>
</dbReference>
<dbReference type="PhylomeDB" id="Q8N412"/>
<dbReference type="TreeFam" id="TF328881"/>
<dbReference type="PathwayCommons" id="Q8N412"/>
<dbReference type="SignaLink" id="Q8N412"/>
<dbReference type="BioGRID-ORCS" id="285555">
    <property type="hits" value="7 hits in 1144 CRISPR screens"/>
</dbReference>
<dbReference type="ChiTaRS" id="STPG2">
    <property type="organism name" value="human"/>
</dbReference>
<dbReference type="GenomeRNAi" id="285555"/>
<dbReference type="Pharos" id="Q8N412">
    <property type="development level" value="Tdark"/>
</dbReference>
<dbReference type="PRO" id="PR:Q8N412"/>
<dbReference type="Proteomes" id="UP000005640">
    <property type="component" value="Chromosome 4"/>
</dbReference>
<dbReference type="RNAct" id="Q8N412">
    <property type="molecule type" value="protein"/>
</dbReference>
<dbReference type="Bgee" id="ENSG00000163116">
    <property type="expression patterns" value="Expressed in male germ line stem cell (sensu Vertebrata) in testis and 79 other cell types or tissues"/>
</dbReference>
<dbReference type="ExpressionAtlas" id="Q8N412">
    <property type="expression patterns" value="baseline and differential"/>
</dbReference>
<dbReference type="InterPro" id="IPR051291">
    <property type="entry name" value="CIMAP"/>
</dbReference>
<dbReference type="InterPro" id="IPR010736">
    <property type="entry name" value="SHIPPO-rpt"/>
</dbReference>
<dbReference type="PANTHER" id="PTHR21580">
    <property type="entry name" value="SHIPPO-1-RELATED"/>
    <property type="match status" value="1"/>
</dbReference>
<dbReference type="PANTHER" id="PTHR21580:SF60">
    <property type="entry name" value="SPERM-TAIL PG-RICH REPEAT-CONTAINING PROTEIN 2"/>
    <property type="match status" value="1"/>
</dbReference>
<dbReference type="Pfam" id="PF07004">
    <property type="entry name" value="SHIPPO-rpt"/>
    <property type="match status" value="6"/>
</dbReference>
<sequence>MYDRAPRLLKLAEGGSTEAHVGPGSYQVPFLKQQATGSNAPFLSLTARESTFTIASSIEKAVPGPGHYNVSEAQKISRSPTLTRSVDVPSIPSCGKSYGYHINDDGSIIKCFPPACDSTLGPAYYKPQFDVSNATLKYKGIHFGNSSGRQELPKKSGPGPGQYDIVQKKTSYYENVNIKRDQQQNYCSFIPRLYEIIVLQEKKKRFLPMKSITPAPGTYNEPRTALKSLKKTSGLKNIPFGQSAVRFTQDIRTEEMPGPGFYNVLNNTIIASVRNICSKKQKKSAFGSSVPRTFFSVQKEACATPGPADYQEFWHSQGVGISDELPNLTNKYAAFLSRAKRTMKVPDMVIPAPGSYDVHKSYEMSQVKHKYMPPRSLVAKRKHASFLSATPRCLEKVTDGPGPAAYNPVLRKSCPIPLFVKASKRFEESKEITPGPATYEISQEKKKGNLIGEMAADIM</sequence>
<protein>
    <recommendedName>
        <fullName>Sperm-tail PG-rich repeat-containing protein 2</fullName>
    </recommendedName>
</protein>
<proteinExistence type="evidence at transcript level"/>
<accession>Q8N412</accession>
<organism>
    <name type="scientific">Homo sapiens</name>
    <name type="common">Human</name>
    <dbReference type="NCBI Taxonomy" id="9606"/>
    <lineage>
        <taxon>Eukaryota</taxon>
        <taxon>Metazoa</taxon>
        <taxon>Chordata</taxon>
        <taxon>Craniata</taxon>
        <taxon>Vertebrata</taxon>
        <taxon>Euteleostomi</taxon>
        <taxon>Mammalia</taxon>
        <taxon>Eutheria</taxon>
        <taxon>Euarchontoglires</taxon>
        <taxon>Primates</taxon>
        <taxon>Haplorrhini</taxon>
        <taxon>Catarrhini</taxon>
        <taxon>Hominidae</taxon>
        <taxon>Homo</taxon>
    </lineage>
</organism>
<keyword id="KW-1185">Reference proteome</keyword>
<keyword id="KW-0677">Repeat</keyword>
<gene>
    <name type="primary">STPG2</name>
    <name type="synonym">C4orf37</name>
</gene>
<reference key="1">
    <citation type="submission" date="2005-07" db="EMBL/GenBank/DDBJ databases">
        <authorList>
            <person name="Mural R.J."/>
            <person name="Istrail S."/>
            <person name="Sutton G.G."/>
            <person name="Florea L."/>
            <person name="Halpern A.L."/>
            <person name="Mobarry C.M."/>
            <person name="Lippert R."/>
            <person name="Walenz B."/>
            <person name="Shatkay H."/>
            <person name="Dew I."/>
            <person name="Miller J.R."/>
            <person name="Flanigan M.J."/>
            <person name="Edwards N.J."/>
            <person name="Bolanos R."/>
            <person name="Fasulo D."/>
            <person name="Halldorsson B.V."/>
            <person name="Hannenhalli S."/>
            <person name="Turner R."/>
            <person name="Yooseph S."/>
            <person name="Lu F."/>
            <person name="Nusskern D.R."/>
            <person name="Shue B.C."/>
            <person name="Zheng X.H."/>
            <person name="Zhong F."/>
            <person name="Delcher A.L."/>
            <person name="Huson D.H."/>
            <person name="Kravitz S.A."/>
            <person name="Mouchard L."/>
            <person name="Reinert K."/>
            <person name="Remington K.A."/>
            <person name="Clark A.G."/>
            <person name="Waterman M.S."/>
            <person name="Eichler E.E."/>
            <person name="Adams M.D."/>
            <person name="Hunkapiller M.W."/>
            <person name="Myers E.W."/>
            <person name="Venter J.C."/>
        </authorList>
    </citation>
    <scope>NUCLEOTIDE SEQUENCE [LARGE SCALE GENOMIC DNA]</scope>
</reference>
<reference key="2">
    <citation type="journal article" date="2004" name="Genome Res.">
        <title>The status, quality, and expansion of the NIH full-length cDNA project: the Mammalian Gene Collection (MGC).</title>
        <authorList>
            <consortium name="The MGC Project Team"/>
        </authorList>
    </citation>
    <scope>NUCLEOTIDE SEQUENCE [LARGE SCALE MRNA]</scope>
    <source>
        <tissue>Pancreas</tissue>
    </source>
</reference>